<protein>
    <recommendedName>
        <fullName evidence="1">Urease accessory protein UreG 1</fullName>
    </recommendedName>
</protein>
<sequence>MTQKNGPLRVGIGGPVGSGKTTLTEKLCKAMRDKYSVAVITNDIYTQEDALILARRQALSEDRIIGVETGGCPHTAIREDASINLQAVVEMTRRFPDLDVVFIESGGDNLAATFSPDLADLTLYVISVCQGEEIPRKGGPGITRSDFLVINKSDLAPYVHVDLEVMEADAMRMRAKRPFGFTDLHRGKGVQEIIDFIVENGGLEPRSN</sequence>
<accession>Q2YPD2</accession>
<accession>Q57F82</accession>
<accession>Q93T78</accession>
<reference key="1">
    <citation type="journal article" date="2007" name="Infect. Immun.">
        <title>Characterization of the urease operon of Brucella abortus and assessment of its role in virulence of the bacterium.</title>
        <authorList>
            <person name="Sangari F.J."/>
            <person name="Seoane A."/>
            <person name="Rodriguez M.C."/>
            <person name="Aguero J."/>
            <person name="Garcia Lobo J.M."/>
        </authorList>
    </citation>
    <scope>NUCLEOTIDE SEQUENCE [GENOMIC DNA]</scope>
    <scope>ROLE IN VIRULENCE</scope>
</reference>
<reference key="2">
    <citation type="journal article" date="2005" name="Infect. Immun.">
        <title>Whole-genome analyses of speciation events in pathogenic Brucellae.</title>
        <authorList>
            <person name="Chain P.S."/>
            <person name="Comerci D.J."/>
            <person name="Tolmasky M.E."/>
            <person name="Larimer F.W."/>
            <person name="Malfatti S.A."/>
            <person name="Vergez L.M."/>
            <person name="Aguero F."/>
            <person name="Land M.L."/>
            <person name="Ugalde R.A."/>
            <person name="Garcia E."/>
        </authorList>
    </citation>
    <scope>NUCLEOTIDE SEQUENCE [LARGE SCALE GENOMIC DNA]</scope>
    <source>
        <strain>2308</strain>
    </source>
</reference>
<dbReference type="EMBL" id="AF361941">
    <property type="protein sequence ID" value="AAK51072.1"/>
    <property type="molecule type" value="Genomic_DNA"/>
</dbReference>
<dbReference type="EMBL" id="AM040264">
    <property type="protein sequence ID" value="CAJ10259.1"/>
    <property type="molecule type" value="Genomic_DNA"/>
</dbReference>
<dbReference type="SMR" id="Q2YPD2"/>
<dbReference type="STRING" id="359391.BAB1_0303"/>
<dbReference type="KEGG" id="bmf:BAB1_0303"/>
<dbReference type="PATRIC" id="fig|359391.11.peg.2351"/>
<dbReference type="HOGENOM" id="CLU_072144_1_0_5"/>
<dbReference type="PhylomeDB" id="Q2YPD2"/>
<dbReference type="Proteomes" id="UP000002719">
    <property type="component" value="Chromosome I"/>
</dbReference>
<dbReference type="GO" id="GO:0005737">
    <property type="term" value="C:cytoplasm"/>
    <property type="evidence" value="ECO:0007669"/>
    <property type="project" value="UniProtKB-SubCell"/>
</dbReference>
<dbReference type="GO" id="GO:0005525">
    <property type="term" value="F:GTP binding"/>
    <property type="evidence" value="ECO:0007669"/>
    <property type="project" value="UniProtKB-KW"/>
</dbReference>
<dbReference type="GO" id="GO:0003924">
    <property type="term" value="F:GTPase activity"/>
    <property type="evidence" value="ECO:0007669"/>
    <property type="project" value="InterPro"/>
</dbReference>
<dbReference type="GO" id="GO:0016151">
    <property type="term" value="F:nickel cation binding"/>
    <property type="evidence" value="ECO:0007669"/>
    <property type="project" value="UniProtKB-UniRule"/>
</dbReference>
<dbReference type="GO" id="GO:0043419">
    <property type="term" value="P:urea catabolic process"/>
    <property type="evidence" value="ECO:0007669"/>
    <property type="project" value="InterPro"/>
</dbReference>
<dbReference type="CDD" id="cd05540">
    <property type="entry name" value="UreG"/>
    <property type="match status" value="1"/>
</dbReference>
<dbReference type="FunFam" id="3.40.50.300:FF:000208">
    <property type="entry name" value="Urease accessory protein UreG"/>
    <property type="match status" value="1"/>
</dbReference>
<dbReference type="Gene3D" id="3.40.50.300">
    <property type="entry name" value="P-loop containing nucleotide triphosphate hydrolases"/>
    <property type="match status" value="1"/>
</dbReference>
<dbReference type="HAMAP" id="MF_01389">
    <property type="entry name" value="UreG"/>
    <property type="match status" value="1"/>
</dbReference>
<dbReference type="InterPro" id="IPR003495">
    <property type="entry name" value="CobW/HypB/UreG_nucleotide-bd"/>
</dbReference>
<dbReference type="InterPro" id="IPR027417">
    <property type="entry name" value="P-loop_NTPase"/>
</dbReference>
<dbReference type="InterPro" id="IPR004400">
    <property type="entry name" value="UreG"/>
</dbReference>
<dbReference type="NCBIfam" id="TIGR00101">
    <property type="entry name" value="ureG"/>
    <property type="match status" value="1"/>
</dbReference>
<dbReference type="PANTHER" id="PTHR31715">
    <property type="entry name" value="UREASE ACCESSORY PROTEIN G"/>
    <property type="match status" value="1"/>
</dbReference>
<dbReference type="PANTHER" id="PTHR31715:SF0">
    <property type="entry name" value="UREASE ACCESSORY PROTEIN G"/>
    <property type="match status" value="1"/>
</dbReference>
<dbReference type="Pfam" id="PF02492">
    <property type="entry name" value="cobW"/>
    <property type="match status" value="1"/>
</dbReference>
<dbReference type="PIRSF" id="PIRSF005624">
    <property type="entry name" value="Ni-bind_GTPase"/>
    <property type="match status" value="1"/>
</dbReference>
<dbReference type="SUPFAM" id="SSF52540">
    <property type="entry name" value="P-loop containing nucleoside triphosphate hydrolases"/>
    <property type="match status" value="1"/>
</dbReference>
<organism>
    <name type="scientific">Brucella abortus (strain 2308)</name>
    <dbReference type="NCBI Taxonomy" id="359391"/>
    <lineage>
        <taxon>Bacteria</taxon>
        <taxon>Pseudomonadati</taxon>
        <taxon>Pseudomonadota</taxon>
        <taxon>Alphaproteobacteria</taxon>
        <taxon>Hyphomicrobiales</taxon>
        <taxon>Brucellaceae</taxon>
        <taxon>Brucella/Ochrobactrum group</taxon>
        <taxon>Brucella</taxon>
    </lineage>
</organism>
<keyword id="KW-0143">Chaperone</keyword>
<keyword id="KW-0963">Cytoplasm</keyword>
<keyword id="KW-0342">GTP-binding</keyword>
<keyword id="KW-0996">Nickel insertion</keyword>
<keyword id="KW-0547">Nucleotide-binding</keyword>
<keyword id="KW-1185">Reference proteome</keyword>
<keyword id="KW-0843">Virulence</keyword>
<proteinExistence type="inferred from homology"/>
<gene>
    <name evidence="1" type="primary">ureG1</name>
    <name type="ordered locus">BAB1_0303</name>
</gene>
<comment type="function">
    <text evidence="1">Facilitates the functional incorporation of the urease nickel metallocenter. This process requires GTP hydrolysis, probably effectuated by UreG.</text>
</comment>
<comment type="function">
    <text evidence="2">Disruption of the ure1 gene cluster suggests that it protects brucellae during their passage through the stomach. The major route of infection in human brucellosis is oral.</text>
</comment>
<comment type="subunit">
    <text evidence="1">Homodimer. UreD, UreF and UreG form a complex that acts as a GTP-hydrolysis-dependent molecular chaperone, activating the urease apoprotein by helping to assemble the nickel containing metallocenter of UreC. The UreE protein probably delivers the nickel.</text>
</comment>
<comment type="subcellular location">
    <subcellularLocation>
        <location evidence="1">Cytoplasm</location>
    </subcellularLocation>
</comment>
<comment type="similarity">
    <text evidence="1">Belongs to the SIMIBI class G3E GTPase family. UreG subfamily.</text>
</comment>
<name>UREG1_BRUA2</name>
<feature type="chain" id="PRO_0000347355" description="Urease accessory protein UreG 1">
    <location>
        <begin position="1"/>
        <end position="208"/>
    </location>
</feature>
<feature type="binding site" evidence="1">
    <location>
        <begin position="14"/>
        <end position="21"/>
    </location>
    <ligand>
        <name>GTP</name>
        <dbReference type="ChEBI" id="CHEBI:37565"/>
    </ligand>
</feature>
<evidence type="ECO:0000255" key="1">
    <source>
        <dbReference type="HAMAP-Rule" id="MF_01389"/>
    </source>
</evidence>
<evidence type="ECO:0000269" key="2">
    <source>
    </source>
</evidence>